<comment type="function">
    <text evidence="1">Catalyzes the reversible adenylation of nicotinate mononucleotide (NaMN) to nicotinic acid adenine dinucleotide (NaAD).</text>
</comment>
<comment type="catalytic activity">
    <reaction evidence="1">
        <text>nicotinate beta-D-ribonucleotide + ATP + H(+) = deamido-NAD(+) + diphosphate</text>
        <dbReference type="Rhea" id="RHEA:22860"/>
        <dbReference type="ChEBI" id="CHEBI:15378"/>
        <dbReference type="ChEBI" id="CHEBI:30616"/>
        <dbReference type="ChEBI" id="CHEBI:33019"/>
        <dbReference type="ChEBI" id="CHEBI:57502"/>
        <dbReference type="ChEBI" id="CHEBI:58437"/>
        <dbReference type="EC" id="2.7.7.18"/>
    </reaction>
</comment>
<comment type="pathway">
    <text evidence="1">Cofactor biosynthesis; NAD(+) biosynthesis; deamido-NAD(+) from nicotinate D-ribonucleotide: step 1/1.</text>
</comment>
<comment type="similarity">
    <text evidence="1">Belongs to the NadD family.</text>
</comment>
<organism>
    <name type="scientific">Chromohalobacter salexigens (strain ATCC BAA-138 / DSM 3043 / CIP 106854 / NCIMB 13768 / 1H11)</name>
    <dbReference type="NCBI Taxonomy" id="290398"/>
    <lineage>
        <taxon>Bacteria</taxon>
        <taxon>Pseudomonadati</taxon>
        <taxon>Pseudomonadota</taxon>
        <taxon>Gammaproteobacteria</taxon>
        <taxon>Oceanospirillales</taxon>
        <taxon>Halomonadaceae</taxon>
        <taxon>Chromohalobacter</taxon>
    </lineage>
</organism>
<accession>Q1QXB3</accession>
<keyword id="KW-0067">ATP-binding</keyword>
<keyword id="KW-0520">NAD</keyword>
<keyword id="KW-0547">Nucleotide-binding</keyword>
<keyword id="KW-0548">Nucleotidyltransferase</keyword>
<keyword id="KW-0662">Pyridine nucleotide biosynthesis</keyword>
<keyword id="KW-1185">Reference proteome</keyword>
<keyword id="KW-0808">Transferase</keyword>
<reference key="1">
    <citation type="journal article" date="2011" name="Stand. Genomic Sci.">
        <title>Complete genome sequence of the halophilic and highly halotolerant Chromohalobacter salexigens type strain (1H11(T)).</title>
        <authorList>
            <person name="Copeland A."/>
            <person name="O'Connor K."/>
            <person name="Lucas S."/>
            <person name="Lapidus A."/>
            <person name="Berry K.W."/>
            <person name="Detter J.C."/>
            <person name="Del Rio T.G."/>
            <person name="Hammon N."/>
            <person name="Dalin E."/>
            <person name="Tice H."/>
            <person name="Pitluck S."/>
            <person name="Bruce D."/>
            <person name="Goodwin L."/>
            <person name="Han C."/>
            <person name="Tapia R."/>
            <person name="Saunders E."/>
            <person name="Schmutz J."/>
            <person name="Brettin T."/>
            <person name="Larimer F."/>
            <person name="Land M."/>
            <person name="Hauser L."/>
            <person name="Vargas C."/>
            <person name="Nieto J.J."/>
            <person name="Kyrpides N.C."/>
            <person name="Ivanova N."/>
            <person name="Goker M."/>
            <person name="Klenk H.P."/>
            <person name="Csonka L.N."/>
            <person name="Woyke T."/>
        </authorList>
    </citation>
    <scope>NUCLEOTIDE SEQUENCE [LARGE SCALE GENOMIC DNA]</scope>
    <source>
        <strain>ATCC BAA-138 / DSM 3043 / CIP 106854 / NCIMB 13768 / 1H11</strain>
    </source>
</reference>
<name>NADD_CHRSD</name>
<gene>
    <name evidence="1" type="primary">nadD</name>
    <name type="ordered locus">Csal_1542</name>
</gene>
<proteinExistence type="inferred from homology"/>
<dbReference type="EC" id="2.7.7.18" evidence="1"/>
<dbReference type="EMBL" id="CP000285">
    <property type="protein sequence ID" value="ABE58895.1"/>
    <property type="molecule type" value="Genomic_DNA"/>
</dbReference>
<dbReference type="RefSeq" id="WP_011506841.1">
    <property type="nucleotide sequence ID" value="NC_007963.1"/>
</dbReference>
<dbReference type="SMR" id="Q1QXB3"/>
<dbReference type="STRING" id="290398.Csal_1542"/>
<dbReference type="GeneID" id="95334273"/>
<dbReference type="KEGG" id="csa:Csal_1542"/>
<dbReference type="eggNOG" id="COG1057">
    <property type="taxonomic scope" value="Bacteria"/>
</dbReference>
<dbReference type="HOGENOM" id="CLU_069765_0_0_6"/>
<dbReference type="OrthoDB" id="5295945at2"/>
<dbReference type="UniPathway" id="UPA00253">
    <property type="reaction ID" value="UER00332"/>
</dbReference>
<dbReference type="Proteomes" id="UP000000239">
    <property type="component" value="Chromosome"/>
</dbReference>
<dbReference type="GO" id="GO:0005524">
    <property type="term" value="F:ATP binding"/>
    <property type="evidence" value="ECO:0007669"/>
    <property type="project" value="UniProtKB-KW"/>
</dbReference>
<dbReference type="GO" id="GO:0004515">
    <property type="term" value="F:nicotinate-nucleotide adenylyltransferase activity"/>
    <property type="evidence" value="ECO:0007669"/>
    <property type="project" value="UniProtKB-UniRule"/>
</dbReference>
<dbReference type="GO" id="GO:0009435">
    <property type="term" value="P:NAD biosynthetic process"/>
    <property type="evidence" value="ECO:0007669"/>
    <property type="project" value="UniProtKB-UniRule"/>
</dbReference>
<dbReference type="CDD" id="cd02165">
    <property type="entry name" value="NMNAT"/>
    <property type="match status" value="1"/>
</dbReference>
<dbReference type="Gene3D" id="3.40.50.620">
    <property type="entry name" value="HUPs"/>
    <property type="match status" value="1"/>
</dbReference>
<dbReference type="HAMAP" id="MF_00244">
    <property type="entry name" value="NaMN_adenylyltr"/>
    <property type="match status" value="1"/>
</dbReference>
<dbReference type="InterPro" id="IPR004821">
    <property type="entry name" value="Cyt_trans-like"/>
</dbReference>
<dbReference type="InterPro" id="IPR005248">
    <property type="entry name" value="NadD/NMNAT"/>
</dbReference>
<dbReference type="InterPro" id="IPR014729">
    <property type="entry name" value="Rossmann-like_a/b/a_fold"/>
</dbReference>
<dbReference type="NCBIfam" id="TIGR00125">
    <property type="entry name" value="cyt_tran_rel"/>
    <property type="match status" value="1"/>
</dbReference>
<dbReference type="NCBIfam" id="TIGR00482">
    <property type="entry name" value="nicotinate (nicotinamide) nucleotide adenylyltransferase"/>
    <property type="match status" value="1"/>
</dbReference>
<dbReference type="NCBIfam" id="NF000839">
    <property type="entry name" value="PRK00071.1-1"/>
    <property type="match status" value="1"/>
</dbReference>
<dbReference type="PANTHER" id="PTHR39321">
    <property type="entry name" value="NICOTINATE-NUCLEOTIDE ADENYLYLTRANSFERASE-RELATED"/>
    <property type="match status" value="1"/>
</dbReference>
<dbReference type="PANTHER" id="PTHR39321:SF3">
    <property type="entry name" value="PHOSPHOPANTETHEINE ADENYLYLTRANSFERASE"/>
    <property type="match status" value="1"/>
</dbReference>
<dbReference type="Pfam" id="PF01467">
    <property type="entry name" value="CTP_transf_like"/>
    <property type="match status" value="1"/>
</dbReference>
<dbReference type="SUPFAM" id="SSF52374">
    <property type="entry name" value="Nucleotidylyl transferase"/>
    <property type="match status" value="1"/>
</dbReference>
<feature type="chain" id="PRO_0000336682" description="Probable nicotinate-nucleotide adenylyltransferase">
    <location>
        <begin position="1"/>
        <end position="219"/>
    </location>
</feature>
<sequence>MCAAEARPARVAMLGGTFDPVHMGHLRSAVELREALELDRVHMVPARVPPHRATPGVSAERRAALLALGIGDTPGLAVDDREIARDGPSYSADTLASLREELGPQARLVMALGHDAYLNLAEWHEPQRLFDLAHIVVIDRPDHDRPLAPALQELVAGREVSDVETLMQAPAGSLLALRLPTRMAISATSIRERLRRGDSIRYLVPEAVERDLLARGLYA</sequence>
<protein>
    <recommendedName>
        <fullName evidence="1">Probable nicotinate-nucleotide adenylyltransferase</fullName>
        <ecNumber evidence="1">2.7.7.18</ecNumber>
    </recommendedName>
    <alternativeName>
        <fullName evidence="1">Deamido-NAD(+) diphosphorylase</fullName>
    </alternativeName>
    <alternativeName>
        <fullName evidence="1">Deamido-NAD(+) pyrophosphorylase</fullName>
    </alternativeName>
    <alternativeName>
        <fullName evidence="1">Nicotinate mononucleotide adenylyltransferase</fullName>
        <shortName evidence="1">NaMN adenylyltransferase</shortName>
    </alternativeName>
</protein>
<evidence type="ECO:0000255" key="1">
    <source>
        <dbReference type="HAMAP-Rule" id="MF_00244"/>
    </source>
</evidence>